<feature type="chain" id="PRO_0000433165" description="Transcriptional corepressor LEUNIG_HOMOLOG">
    <location>
        <begin position="1"/>
        <end position="787"/>
    </location>
</feature>
<feature type="domain" description="LisH" evidence="3">
    <location>
        <begin position="8"/>
        <end position="40"/>
    </location>
</feature>
<feature type="repeat" description="WD 1" evidence="2">
    <location>
        <begin position="508"/>
        <end position="547"/>
    </location>
</feature>
<feature type="repeat" description="WD 2" evidence="2">
    <location>
        <begin position="550"/>
        <end position="589"/>
    </location>
</feature>
<feature type="repeat" description="WD 3" evidence="2">
    <location>
        <begin position="593"/>
        <end position="633"/>
    </location>
</feature>
<feature type="repeat" description="WD 4" evidence="2">
    <location>
        <begin position="635"/>
        <end position="671"/>
    </location>
</feature>
<feature type="repeat" description="WD 5" evidence="2">
    <location>
        <begin position="675"/>
        <end position="715"/>
    </location>
</feature>
<feature type="repeat" description="WD 6" evidence="2">
    <location>
        <begin position="717"/>
        <end position="755"/>
    </location>
</feature>
<feature type="repeat" description="WD 7" evidence="2">
    <location>
        <begin position="757"/>
        <end position="787"/>
    </location>
</feature>
<feature type="region of interest" description="Required for SEU-binding" evidence="1">
    <location>
        <begin position="1"/>
        <end position="88"/>
    </location>
</feature>
<feature type="region of interest" description="Disordered" evidence="4">
    <location>
        <begin position="299"/>
        <end position="413"/>
    </location>
</feature>
<feature type="coiled-coil region" evidence="2">
    <location>
        <begin position="77"/>
        <end position="106"/>
    </location>
</feature>
<feature type="compositionally biased region" description="Low complexity" evidence="4">
    <location>
        <begin position="336"/>
        <end position="346"/>
    </location>
</feature>
<feature type="compositionally biased region" description="Low complexity" evidence="4">
    <location>
        <begin position="355"/>
        <end position="372"/>
    </location>
</feature>
<feature type="compositionally biased region" description="Polar residues" evidence="4">
    <location>
        <begin position="380"/>
        <end position="409"/>
    </location>
</feature>
<feature type="splice variant" id="VSP_057680" description="In isoform 2.">
    <original>A</original>
    <variation>AGKYINVLHCRVIAHRKENG</variation>
    <location>
        <position position="237"/>
    </location>
</feature>
<feature type="splice variant" id="VSP_057681" description="In isoform 3.">
    <location>
        <begin position="449"/>
        <end position="450"/>
    </location>
</feature>
<feature type="mutagenesis site" description="In luh-2;." evidence="6">
    <original>S</original>
    <variation>F</variation>
    <location>
        <position position="123"/>
    </location>
</feature>
<comment type="function">
    <text evidence="5 6 7 8 9 10 11">Transcription repressor subunit of the SEU-SLK1 and SEU-SLK2 transcriptional corepressor of abiotic stress (e.g. salt and osmotic stress) response genes, by means of an epigenetic process involving histone modification (e.g. H3K9 and H3K14 acetylation), probably by recruiting HDAC, to facilitate the condensation of chromatin thus preventing transcription at the target genes (PubMed:24564815). Can also act as a transcription activator (PubMed:21518777). Implicated in embryo and floral development (PubMed:18390806). Involved in post-synthesis cell wall modifications necessary for mucilage extrusion from seeds upon imbibition, probably by promoting the expression of genes required for mucilage maturation (e.g. MUM2) (PubMed:11706181, PubMed:21362134, PubMed:21402796, PubMed:21518777). Regulates the maintenance on leaf polarity and meristem activity as well as the initiation of embryonic shoot apical meristem (SAM) development (PubMed:19837869).</text>
</comment>
<comment type="subunit">
    <text evidence="6 7 11">Forms corepressor complexes with SLK1 and SLK2; LUH is the transcription repressor subunit and SLK1 and SLK2 the specific DNA-binding adapters (PubMed:24564815). Interacts with SEU (PubMed:18390806). Binds to YAB3, YAB5 and YAB1/FIL; these complexes promote adaxial cell identity in leaves as well as embryonic shoot apical meristem (SAM) initiation and postembryonic SAM maintenance (PubMed:19837869).</text>
</comment>
<comment type="interaction">
    <interactant intactId="EBI-3387563">
        <id>O48847</id>
    </interactant>
    <interactant intactId="EBI-3387023">
        <id>Q8H102</id>
        <label>BHLH128</label>
    </interactant>
    <organismsDiffer>false</organismsDiffer>
    <experiments>4</experiments>
</comment>
<comment type="interaction">
    <interactant intactId="EBI-3387563">
        <id>O48847</id>
    </interactant>
    <interactant intactId="EBI-963647">
        <id>Q9C8Y3</id>
        <label>RGL1</label>
    </interactant>
    <organismsDiffer>false</organismsDiffer>
    <experiments>3</experiments>
</comment>
<comment type="subcellular location">
    <subcellularLocation>
        <location evidence="10">Nucleus</location>
    </subcellularLocation>
</comment>
<comment type="alternative products">
    <event type="alternative splicing"/>
    <isoform>
        <id>O48847-1</id>
        <name>1</name>
        <sequence type="displayed"/>
    </isoform>
    <isoform>
        <id>O48847-2</id>
        <name>2</name>
        <sequence type="described" ref="VSP_057680"/>
    </isoform>
    <isoform>
        <id>O48847-3</id>
        <name>3</name>
        <sequence type="described" ref="VSP_057681"/>
    </isoform>
</comment>
<comment type="tissue specificity">
    <text evidence="6 10">Expressed in roots, stems, leaves, seedlings, apex, flowers, siliques, flower organs and seeds (including seed coat).</text>
</comment>
<comment type="developmental stage">
    <text evidence="7 10">Accumulates throughout young developing leaves, before being confined to the vasculature of older leaves (PubMed:19837869). Expressed during seed coat development, reaching peak expression late in differentiation at 10 days post anthesis (DPA) (PubMed:21518777).</text>
</comment>
<comment type="induction">
    <text evidence="6">Induced by exposures to biotic stress (e.g. nematode and Botrytis cinerea) and abiotic stress (e.g. salt, genotoxic, wounding, drought and oxidative stress). Repressed by exposures to biotic stress (e.g. Agrobacterium tumefaciens) and abiotic stress (e.g. hypoxia, cycloheximide, 2,4-dichlorophenoxyacetic acid, AgNO(3) and aminoethoxyvinylglycine).</text>
</comment>
<comment type="disruption phenotype">
    <text evidence="5 6 7 8 9 10 11">Strong defects in seed mucilage extrusion; no mucilage capsule formation and slightly irregular columellae in seeds. Altered structure of mucilage that accumulates abnormal levels of substituted rhamnogalacturonan I and methyl-esterified homogalacturonan. Increased amount of most sugars associated with an increase in methylation of the mucilage and/or primary cell wall pectins (PubMed:11706181, PubMed:21362134, PubMed:21402796, PubMed:21518777). Reduced MUM2 expression in seed coat and embryo. Shorter roots (PubMed:21402796). Enhanced tolerance to salt and osmotic stress conditions (PubMed:24564815). In plants lacking both LUG and LUH, embryo lethality and abnormal flowers (PubMed:18390806). Enhance the polarity and growth defects of luh/+ lug mutant leaves, being partially abaxialized (PubMed:19837869).</text>
</comment>
<organism evidence="16">
    <name type="scientific">Arabidopsis thaliana</name>
    <name type="common">Mouse-ear cress</name>
    <dbReference type="NCBI Taxonomy" id="3702"/>
    <lineage>
        <taxon>Eukaryota</taxon>
        <taxon>Viridiplantae</taxon>
        <taxon>Streptophyta</taxon>
        <taxon>Embryophyta</taxon>
        <taxon>Tracheophyta</taxon>
        <taxon>Spermatophyta</taxon>
        <taxon>Magnoliopsida</taxon>
        <taxon>eudicotyledons</taxon>
        <taxon>Gunneridae</taxon>
        <taxon>Pentapetalae</taxon>
        <taxon>rosids</taxon>
        <taxon>malvids</taxon>
        <taxon>Brassicales</taxon>
        <taxon>Brassicaceae</taxon>
        <taxon>Camelineae</taxon>
        <taxon>Arabidopsis</taxon>
    </lineage>
</organism>
<keyword id="KW-0010">Activator</keyword>
<keyword id="KW-0025">Alternative splicing</keyword>
<keyword id="KW-0175">Coiled coil</keyword>
<keyword id="KW-0217">Developmental protein</keyword>
<keyword id="KW-0221">Differentiation</keyword>
<keyword id="KW-0287">Flowering</keyword>
<keyword id="KW-0539">Nucleus</keyword>
<keyword id="KW-1185">Reference proteome</keyword>
<keyword id="KW-0677">Repeat</keyword>
<keyword id="KW-0678">Repressor</keyword>
<keyword id="KW-0804">Transcription</keyword>
<keyword id="KW-0805">Transcription regulation</keyword>
<keyword id="KW-0853">WD repeat</keyword>
<sequence length="787" mass="85515">MAQSNWEADKMLDVYIYDYLVKKKLHNTAKSFMTEGKVSPDPVAIDAPGGFLFEWWSVFWDIFIARTNEKHSEAAAAYIEAQQGKAKEQQMQIQQLQMMRQAQMQRRDPNHPSLGGPMNAIGSEGMIGQSNASALAAKMYEERMKQPNPMNSETSQPHLDARMALLKSATNHHGQIVQGNHQGGVSAALQQIQSRTQQPTEIKTEVNLGTSPRQLPVDPSTVYGQGILQSKPGMGSAGLNPGVSGLPLKGWPLTGIEQMRPGLGGPQVQKSFLQNQSQFQLSPQQQQHQMLAQVQAQGNMTNSPMYGGDMDPRRFTGLPRGNLNPKDGQQNANDGSIGSPMQSSSSKHISMPPVQQSSSQQQDHLLSQQSQQNNRKRKGPSSSGPANSTGTGNTVGPSNSQPSTPSTHTPVDGVAIAGNMHHVNSMPKGPMMYGSDGIGGLASSANQLLQDDMDQFGDVGALEDNVESFLSQDDGDGGSLFGTLKRNSSVHTETSKPFSFNEVSCIRKSASKVICCSFSYDGKLLASAGHDKKVFIWNMETLQVESTPEEHAHIITDVRFRPNSTQLATSSFDKTIKIWDASDPGYFLRTISGHAAPVMSIDFHPKKTELLCSCDSNNDIRFWDINASCVRAVKGASTQVRFQPRTGQFLAAASENTVSIFDIENNNKRVNIFKGHSSNVHSVCWSPNGELVASVSEDAVKLWSLSSGDCIHELSNSGNKFHSVVFHPSYPDLLVIGGYQAIELWNTMENKCMTVAGHECVISALAQSPSTGVVASASHDKSVKIWK</sequence>
<gene>
    <name evidence="15" type="primary">LUH</name>
    <name evidence="12" type="synonym">MUM1</name>
    <name evidence="13" type="ordered locus">At2g32700</name>
    <name evidence="14" type="ORF">F24L7.16</name>
</gene>
<protein>
    <recommendedName>
        <fullName>Transcriptional corepressor LEUNIG_HOMOLOG</fullName>
    </recommendedName>
    <alternativeName>
        <fullName evidence="12">Protein MUCILAGE-MODIFIED 1</fullName>
    </alternativeName>
</protein>
<dbReference type="EMBL" id="AC003974">
    <property type="protein sequence ID" value="AAC04493.1"/>
    <property type="molecule type" value="Genomic_DNA"/>
</dbReference>
<dbReference type="EMBL" id="CP002685">
    <property type="protein sequence ID" value="AEC08720.1"/>
    <property type="molecule type" value="Genomic_DNA"/>
</dbReference>
<dbReference type="EMBL" id="CP002685">
    <property type="protein sequence ID" value="AEC08721.1"/>
    <property type="molecule type" value="Genomic_DNA"/>
</dbReference>
<dbReference type="EMBL" id="CP002685">
    <property type="protein sequence ID" value="AEC08722.1"/>
    <property type="molecule type" value="Genomic_DNA"/>
</dbReference>
<dbReference type="EMBL" id="CP002685">
    <property type="protein sequence ID" value="AEC08723.1"/>
    <property type="molecule type" value="Genomic_DNA"/>
</dbReference>
<dbReference type="EMBL" id="CP002685">
    <property type="protein sequence ID" value="AEC08724.1"/>
    <property type="molecule type" value="Genomic_DNA"/>
</dbReference>
<dbReference type="EMBL" id="CP002685">
    <property type="protein sequence ID" value="AEC08725.1"/>
    <property type="molecule type" value="Genomic_DNA"/>
</dbReference>
<dbReference type="EMBL" id="CP002685">
    <property type="protein sequence ID" value="AEC08726.1"/>
    <property type="molecule type" value="Genomic_DNA"/>
</dbReference>
<dbReference type="EMBL" id="AF367306">
    <property type="protein sequence ID" value="AAK32893.1"/>
    <property type="molecule type" value="mRNA"/>
</dbReference>
<dbReference type="EMBL" id="BT002219">
    <property type="protein sequence ID" value="AAN72230.1"/>
    <property type="molecule type" value="mRNA"/>
</dbReference>
<dbReference type="EMBL" id="AK226299">
    <property type="protein sequence ID" value="BAE98454.1"/>
    <property type="molecule type" value="mRNA"/>
</dbReference>
<dbReference type="PIR" id="T00798">
    <property type="entry name" value="T00798"/>
</dbReference>
<dbReference type="RefSeq" id="NP_001031466.2">
    <molecule id="O48847-3"/>
    <property type="nucleotide sequence ID" value="NM_001036389.4"/>
</dbReference>
<dbReference type="RefSeq" id="NP_001189659.1">
    <molecule id="O48847-2"/>
    <property type="nucleotide sequence ID" value="NM_001202730.1"/>
</dbReference>
<dbReference type="RefSeq" id="NP_565749.1">
    <molecule id="O48847-1"/>
    <property type="nucleotide sequence ID" value="NM_128829.4"/>
</dbReference>
<dbReference type="RefSeq" id="NP_850192.1">
    <molecule id="O48847-1"/>
    <property type="nucleotide sequence ID" value="NM_179861.3"/>
</dbReference>
<dbReference type="RefSeq" id="NP_850193.1">
    <molecule id="O48847-1"/>
    <property type="nucleotide sequence ID" value="NM_179862.2"/>
</dbReference>
<dbReference type="RefSeq" id="NP_850194.1">
    <molecule id="O48847-1"/>
    <property type="nucleotide sequence ID" value="NM_179863.3"/>
</dbReference>
<dbReference type="RefSeq" id="NP_850195.2">
    <molecule id="O48847-1"/>
    <property type="nucleotide sequence ID" value="NM_179864.3"/>
</dbReference>
<dbReference type="SMR" id="O48847"/>
<dbReference type="FunCoup" id="O48847">
    <property type="interactions" value="1765"/>
</dbReference>
<dbReference type="IntAct" id="O48847">
    <property type="interactions" value="11"/>
</dbReference>
<dbReference type="STRING" id="3702.O48847"/>
<dbReference type="GlyGen" id="O48847">
    <property type="glycosylation" value="4 sites, 1 O-linked glycan (3 sites)"/>
</dbReference>
<dbReference type="iPTMnet" id="O48847"/>
<dbReference type="PaxDb" id="3702-AT2G32700.7"/>
<dbReference type="ProteomicsDB" id="238742">
    <molecule id="O48847-1"/>
</dbReference>
<dbReference type="EnsemblPlants" id="AT2G32700.1">
    <molecule id="O48847-1"/>
    <property type="protein sequence ID" value="AT2G32700.1"/>
    <property type="gene ID" value="AT2G32700"/>
</dbReference>
<dbReference type="EnsemblPlants" id="AT2G32700.2">
    <molecule id="O48847-1"/>
    <property type="protein sequence ID" value="AT2G32700.2"/>
    <property type="gene ID" value="AT2G32700"/>
</dbReference>
<dbReference type="EnsemblPlants" id="AT2G32700.3">
    <molecule id="O48847-1"/>
    <property type="protein sequence ID" value="AT2G32700.3"/>
    <property type="gene ID" value="AT2G32700"/>
</dbReference>
<dbReference type="EnsemblPlants" id="AT2G32700.4">
    <molecule id="O48847-1"/>
    <property type="protein sequence ID" value="AT2G32700.4"/>
    <property type="gene ID" value="AT2G32700"/>
</dbReference>
<dbReference type="EnsemblPlants" id="AT2G32700.5">
    <molecule id="O48847-1"/>
    <property type="protein sequence ID" value="AT2G32700.5"/>
    <property type="gene ID" value="AT2G32700"/>
</dbReference>
<dbReference type="EnsemblPlants" id="AT2G32700.6">
    <molecule id="O48847-3"/>
    <property type="protein sequence ID" value="AT2G32700.6"/>
    <property type="gene ID" value="AT2G32700"/>
</dbReference>
<dbReference type="EnsemblPlants" id="AT2G32700.7">
    <molecule id="O48847-2"/>
    <property type="protein sequence ID" value="AT2G32700.7"/>
    <property type="gene ID" value="AT2G32700"/>
</dbReference>
<dbReference type="GeneID" id="817830"/>
<dbReference type="Gramene" id="AT2G32700.1">
    <molecule id="O48847-1"/>
    <property type="protein sequence ID" value="AT2G32700.1"/>
    <property type="gene ID" value="AT2G32700"/>
</dbReference>
<dbReference type="Gramene" id="AT2G32700.2">
    <molecule id="O48847-1"/>
    <property type="protein sequence ID" value="AT2G32700.2"/>
    <property type="gene ID" value="AT2G32700"/>
</dbReference>
<dbReference type="Gramene" id="AT2G32700.3">
    <molecule id="O48847-1"/>
    <property type="protein sequence ID" value="AT2G32700.3"/>
    <property type="gene ID" value="AT2G32700"/>
</dbReference>
<dbReference type="Gramene" id="AT2G32700.4">
    <molecule id="O48847-1"/>
    <property type="protein sequence ID" value="AT2G32700.4"/>
    <property type="gene ID" value="AT2G32700"/>
</dbReference>
<dbReference type="Gramene" id="AT2G32700.5">
    <molecule id="O48847-1"/>
    <property type="protein sequence ID" value="AT2G32700.5"/>
    <property type="gene ID" value="AT2G32700"/>
</dbReference>
<dbReference type="Gramene" id="AT2G32700.6">
    <molecule id="O48847-3"/>
    <property type="protein sequence ID" value="AT2G32700.6"/>
    <property type="gene ID" value="AT2G32700"/>
</dbReference>
<dbReference type="Gramene" id="AT2G32700.7">
    <molecule id="O48847-2"/>
    <property type="protein sequence ID" value="AT2G32700.7"/>
    <property type="gene ID" value="AT2G32700"/>
</dbReference>
<dbReference type="KEGG" id="ath:AT2G32700"/>
<dbReference type="Araport" id="AT2G32700"/>
<dbReference type="TAIR" id="AT2G32700">
    <property type="gene designation" value="LUH"/>
</dbReference>
<dbReference type="eggNOG" id="KOG0266">
    <property type="taxonomic scope" value="Eukaryota"/>
</dbReference>
<dbReference type="InParanoid" id="O48847"/>
<dbReference type="OMA" id="SMTIQAH"/>
<dbReference type="PhylomeDB" id="O48847"/>
<dbReference type="PRO" id="PR:O48847"/>
<dbReference type="Proteomes" id="UP000006548">
    <property type="component" value="Chromosome 2"/>
</dbReference>
<dbReference type="ExpressionAtlas" id="O48847">
    <property type="expression patterns" value="baseline and differential"/>
</dbReference>
<dbReference type="GO" id="GO:0005634">
    <property type="term" value="C:nucleus"/>
    <property type="evidence" value="ECO:0000314"/>
    <property type="project" value="UniProtKB"/>
</dbReference>
<dbReference type="GO" id="GO:0003713">
    <property type="term" value="F:transcription coactivator activity"/>
    <property type="evidence" value="ECO:0000314"/>
    <property type="project" value="TAIR"/>
</dbReference>
<dbReference type="GO" id="GO:0003714">
    <property type="term" value="F:transcription corepressor activity"/>
    <property type="evidence" value="ECO:0007669"/>
    <property type="project" value="InterPro"/>
</dbReference>
<dbReference type="GO" id="GO:0030154">
    <property type="term" value="P:cell differentiation"/>
    <property type="evidence" value="ECO:0007669"/>
    <property type="project" value="UniProtKB-KW"/>
</dbReference>
<dbReference type="GO" id="GO:0071217">
    <property type="term" value="P:cellular response to external biotic stimulus"/>
    <property type="evidence" value="ECO:0000314"/>
    <property type="project" value="UniProtKB"/>
</dbReference>
<dbReference type="GO" id="GO:0006974">
    <property type="term" value="P:DNA damage response"/>
    <property type="evidence" value="ECO:0000270"/>
    <property type="project" value="UniProtKB"/>
</dbReference>
<dbReference type="GO" id="GO:0009793">
    <property type="term" value="P:embryo development ending in seed dormancy"/>
    <property type="evidence" value="ECO:0000316"/>
    <property type="project" value="TAIR"/>
</dbReference>
<dbReference type="GO" id="GO:0009908">
    <property type="term" value="P:flower development"/>
    <property type="evidence" value="ECO:0000316"/>
    <property type="project" value="TAIR"/>
</dbReference>
<dbReference type="GO" id="GO:0010393">
    <property type="term" value="P:galacturonan metabolic process"/>
    <property type="evidence" value="ECO:0000315"/>
    <property type="project" value="UniProtKB"/>
</dbReference>
<dbReference type="GO" id="GO:0010073">
    <property type="term" value="P:meristem maintenance"/>
    <property type="evidence" value="ECO:0000315"/>
    <property type="project" value="UniProtKB"/>
</dbReference>
<dbReference type="GO" id="GO:0010192">
    <property type="term" value="P:mucilage biosynthetic process"/>
    <property type="evidence" value="ECO:0000315"/>
    <property type="project" value="UniProtKB"/>
</dbReference>
<dbReference type="GO" id="GO:0080001">
    <property type="term" value="P:mucilage extrusion from seed coat"/>
    <property type="evidence" value="ECO:0000315"/>
    <property type="project" value="UniProtKB"/>
</dbReference>
<dbReference type="GO" id="GO:0048359">
    <property type="term" value="P:mucilage metabolic process involved in seed coat development"/>
    <property type="evidence" value="ECO:0000315"/>
    <property type="project" value="UniProtKB"/>
</dbReference>
<dbReference type="GO" id="GO:0048358">
    <property type="term" value="P:mucilage pectin biosynthetic process"/>
    <property type="evidence" value="ECO:0000315"/>
    <property type="project" value="TAIR"/>
</dbReference>
<dbReference type="GO" id="GO:0045892">
    <property type="term" value="P:negative regulation of DNA-templated transcription"/>
    <property type="evidence" value="ECO:0000314"/>
    <property type="project" value="UniProtKB"/>
</dbReference>
<dbReference type="GO" id="GO:1901001">
    <property type="term" value="P:negative regulation of response to salt stress"/>
    <property type="evidence" value="ECO:0000315"/>
    <property type="project" value="UniProtKB"/>
</dbReference>
<dbReference type="GO" id="GO:0009827">
    <property type="term" value="P:plant-type cell wall modification"/>
    <property type="evidence" value="ECO:0000315"/>
    <property type="project" value="UniProtKB"/>
</dbReference>
<dbReference type="GO" id="GO:0009944">
    <property type="term" value="P:polarity specification of adaxial/abaxial axis"/>
    <property type="evidence" value="ECO:0000315"/>
    <property type="project" value="UniProtKB"/>
</dbReference>
<dbReference type="GO" id="GO:0045893">
    <property type="term" value="P:positive regulation of DNA-templated transcription"/>
    <property type="evidence" value="ECO:0000314"/>
    <property type="project" value="UniProtKB"/>
</dbReference>
<dbReference type="GO" id="GO:1902066">
    <property type="term" value="P:regulation of cell wall pectin metabolic process"/>
    <property type="evidence" value="ECO:0000315"/>
    <property type="project" value="TAIR"/>
</dbReference>
<dbReference type="GO" id="GO:0006355">
    <property type="term" value="P:regulation of DNA-templated transcription"/>
    <property type="evidence" value="ECO:0000315"/>
    <property type="project" value="TAIR"/>
</dbReference>
<dbReference type="GO" id="GO:0045995">
    <property type="term" value="P:regulation of embryonic development"/>
    <property type="evidence" value="ECO:0000315"/>
    <property type="project" value="UniProtKB"/>
</dbReference>
<dbReference type="GO" id="GO:0009909">
    <property type="term" value="P:regulation of flower development"/>
    <property type="evidence" value="ECO:0000315"/>
    <property type="project" value="UniProtKB"/>
</dbReference>
<dbReference type="GO" id="GO:2000024">
    <property type="term" value="P:regulation of leaf development"/>
    <property type="evidence" value="ECO:0000315"/>
    <property type="project" value="UniProtKB"/>
</dbReference>
<dbReference type="GO" id="GO:0047484">
    <property type="term" value="P:regulation of response to osmotic stress"/>
    <property type="evidence" value="ECO:0000315"/>
    <property type="project" value="UniProtKB"/>
</dbReference>
<dbReference type="GO" id="GO:1902183">
    <property type="term" value="P:regulation of shoot apical meristem development"/>
    <property type="evidence" value="ECO:0000315"/>
    <property type="project" value="UniProtKB"/>
</dbReference>
<dbReference type="GO" id="GO:0010044">
    <property type="term" value="P:response to aluminum ion"/>
    <property type="evidence" value="ECO:0000315"/>
    <property type="project" value="TAIR"/>
</dbReference>
<dbReference type="GO" id="GO:0009733">
    <property type="term" value="P:response to auxin"/>
    <property type="evidence" value="ECO:0000270"/>
    <property type="project" value="UniProtKB"/>
</dbReference>
<dbReference type="GO" id="GO:0009617">
    <property type="term" value="P:response to bacterium"/>
    <property type="evidence" value="ECO:0000270"/>
    <property type="project" value="UniProtKB"/>
</dbReference>
<dbReference type="GO" id="GO:0046898">
    <property type="term" value="P:response to cycloheximide"/>
    <property type="evidence" value="ECO:0000270"/>
    <property type="project" value="UniProtKB"/>
</dbReference>
<dbReference type="GO" id="GO:0009620">
    <property type="term" value="P:response to fungus"/>
    <property type="evidence" value="ECO:0000270"/>
    <property type="project" value="UniProtKB"/>
</dbReference>
<dbReference type="GO" id="GO:0001666">
    <property type="term" value="P:response to hypoxia"/>
    <property type="evidence" value="ECO:0000270"/>
    <property type="project" value="UniProtKB"/>
</dbReference>
<dbReference type="GO" id="GO:0009624">
    <property type="term" value="P:response to nematode"/>
    <property type="evidence" value="ECO:0000270"/>
    <property type="project" value="UniProtKB"/>
</dbReference>
<dbReference type="GO" id="GO:0006979">
    <property type="term" value="P:response to oxidative stress"/>
    <property type="evidence" value="ECO:0000270"/>
    <property type="project" value="UniProtKB"/>
</dbReference>
<dbReference type="GO" id="GO:1902074">
    <property type="term" value="P:response to salt"/>
    <property type="evidence" value="ECO:0000270"/>
    <property type="project" value="UniProtKB"/>
</dbReference>
<dbReference type="GO" id="GO:0010272">
    <property type="term" value="P:response to silver ion"/>
    <property type="evidence" value="ECO:0000270"/>
    <property type="project" value="UniProtKB"/>
</dbReference>
<dbReference type="GO" id="GO:0009414">
    <property type="term" value="P:response to water deprivation"/>
    <property type="evidence" value="ECO:0000270"/>
    <property type="project" value="UniProtKB"/>
</dbReference>
<dbReference type="GO" id="GO:0009611">
    <property type="term" value="P:response to wounding"/>
    <property type="evidence" value="ECO:0000270"/>
    <property type="project" value="UniProtKB"/>
</dbReference>
<dbReference type="CDD" id="cd00200">
    <property type="entry name" value="WD40"/>
    <property type="match status" value="1"/>
</dbReference>
<dbReference type="FunFam" id="2.130.10.10:FF:002012">
    <property type="entry name" value="Transcriptional corepressor LEUNIG_HOMOLOG"/>
    <property type="match status" value="1"/>
</dbReference>
<dbReference type="Gene3D" id="2.130.10.10">
    <property type="entry name" value="YVTN repeat-like/Quinoprotein amine dehydrogenase"/>
    <property type="match status" value="2"/>
</dbReference>
<dbReference type="InterPro" id="IPR020472">
    <property type="entry name" value="G-protein_beta_WD-40_rep"/>
</dbReference>
<dbReference type="InterPro" id="IPR044716">
    <property type="entry name" value="LEUNIG-like"/>
</dbReference>
<dbReference type="InterPro" id="IPR006594">
    <property type="entry name" value="LisH"/>
</dbReference>
<dbReference type="InterPro" id="IPR015943">
    <property type="entry name" value="WD40/YVTN_repeat-like_dom_sf"/>
</dbReference>
<dbReference type="InterPro" id="IPR019775">
    <property type="entry name" value="WD40_repeat_CS"/>
</dbReference>
<dbReference type="InterPro" id="IPR036322">
    <property type="entry name" value="WD40_repeat_dom_sf"/>
</dbReference>
<dbReference type="InterPro" id="IPR001680">
    <property type="entry name" value="WD40_rpt"/>
</dbReference>
<dbReference type="PANTHER" id="PTHR44376:SF9">
    <property type="entry name" value="TRANSCRIPTIONAL COREPRESSOR LEUNIG_HOMOLOG"/>
    <property type="match status" value="1"/>
</dbReference>
<dbReference type="PANTHER" id="PTHR44376">
    <property type="entry name" value="TRANSCRIPTIONAL REGULATOR OF FILAMENTOUS GROWTH FLO8"/>
    <property type="match status" value="1"/>
</dbReference>
<dbReference type="Pfam" id="PF08513">
    <property type="entry name" value="LisH"/>
    <property type="match status" value="1"/>
</dbReference>
<dbReference type="Pfam" id="PF00400">
    <property type="entry name" value="WD40"/>
    <property type="match status" value="5"/>
</dbReference>
<dbReference type="PRINTS" id="PR00320">
    <property type="entry name" value="GPROTEINBRPT"/>
</dbReference>
<dbReference type="SMART" id="SM00667">
    <property type="entry name" value="LisH"/>
    <property type="match status" value="1"/>
</dbReference>
<dbReference type="SMART" id="SM00320">
    <property type="entry name" value="WD40"/>
    <property type="match status" value="7"/>
</dbReference>
<dbReference type="SUPFAM" id="SSF50978">
    <property type="entry name" value="WD40 repeat-like"/>
    <property type="match status" value="1"/>
</dbReference>
<dbReference type="PROSITE" id="PS50896">
    <property type="entry name" value="LISH"/>
    <property type="match status" value="1"/>
</dbReference>
<dbReference type="PROSITE" id="PS00678">
    <property type="entry name" value="WD_REPEATS_1"/>
    <property type="match status" value="3"/>
</dbReference>
<dbReference type="PROSITE" id="PS50082">
    <property type="entry name" value="WD_REPEATS_2"/>
    <property type="match status" value="5"/>
</dbReference>
<dbReference type="PROSITE" id="PS50294">
    <property type="entry name" value="WD_REPEATS_REGION"/>
    <property type="match status" value="1"/>
</dbReference>
<name>LUH_ARATH</name>
<accession>O48847</accession>
<accession>F4ITU4</accession>
<accession>F4ITV0</accession>
<accession>Q0WWP4</accession>
<accession>Q3EBQ0</accession>
<proteinExistence type="evidence at protein level"/>
<evidence type="ECO:0000250" key="1">
    <source>
        <dbReference type="UniProtKB" id="Q9FUY2"/>
    </source>
</evidence>
<evidence type="ECO:0000255" key="2"/>
<evidence type="ECO:0000255" key="3">
    <source>
        <dbReference type="PROSITE-ProRule" id="PRU00126"/>
    </source>
</evidence>
<evidence type="ECO:0000256" key="4">
    <source>
        <dbReference type="SAM" id="MobiDB-lite"/>
    </source>
</evidence>
<evidence type="ECO:0000269" key="5">
    <source>
    </source>
</evidence>
<evidence type="ECO:0000269" key="6">
    <source>
    </source>
</evidence>
<evidence type="ECO:0000269" key="7">
    <source>
    </source>
</evidence>
<evidence type="ECO:0000269" key="8">
    <source>
    </source>
</evidence>
<evidence type="ECO:0000269" key="9">
    <source>
    </source>
</evidence>
<evidence type="ECO:0000269" key="10">
    <source>
    </source>
</evidence>
<evidence type="ECO:0000269" key="11">
    <source>
    </source>
</evidence>
<evidence type="ECO:0000303" key="12">
    <source>
    </source>
</evidence>
<evidence type="ECO:0000312" key="13">
    <source>
        <dbReference type="Araport" id="AT2G32700"/>
    </source>
</evidence>
<evidence type="ECO:0000312" key="14">
    <source>
        <dbReference type="EMBL" id="AAC04493.1"/>
    </source>
</evidence>
<evidence type="ECO:0000312" key="15">
    <source>
        <dbReference type="EMBL" id="AEC08720.1"/>
    </source>
</evidence>
<evidence type="ECO:0000312" key="16">
    <source>
        <dbReference type="Proteomes" id="UP000006548"/>
    </source>
</evidence>
<reference key="1">
    <citation type="journal article" date="1999" name="Nature">
        <title>Sequence and analysis of chromosome 2 of the plant Arabidopsis thaliana.</title>
        <authorList>
            <person name="Lin X."/>
            <person name="Kaul S."/>
            <person name="Rounsley S.D."/>
            <person name="Shea T.P."/>
            <person name="Benito M.-I."/>
            <person name="Town C.D."/>
            <person name="Fujii C.Y."/>
            <person name="Mason T.M."/>
            <person name="Bowman C.L."/>
            <person name="Barnstead M.E."/>
            <person name="Feldblyum T.V."/>
            <person name="Buell C.R."/>
            <person name="Ketchum K.A."/>
            <person name="Lee J.J."/>
            <person name="Ronning C.M."/>
            <person name="Koo H.L."/>
            <person name="Moffat K.S."/>
            <person name="Cronin L.A."/>
            <person name="Shen M."/>
            <person name="Pai G."/>
            <person name="Van Aken S."/>
            <person name="Umayam L."/>
            <person name="Tallon L.J."/>
            <person name="Gill J.E."/>
            <person name="Adams M.D."/>
            <person name="Carrera A.J."/>
            <person name="Creasy T.H."/>
            <person name="Goodman H.M."/>
            <person name="Somerville C.R."/>
            <person name="Copenhaver G.P."/>
            <person name="Preuss D."/>
            <person name="Nierman W.C."/>
            <person name="White O."/>
            <person name="Eisen J.A."/>
            <person name="Salzberg S.L."/>
            <person name="Fraser C.M."/>
            <person name="Venter J.C."/>
        </authorList>
    </citation>
    <scope>NUCLEOTIDE SEQUENCE [LARGE SCALE GENOMIC DNA]</scope>
    <source>
        <strain>cv. Columbia</strain>
    </source>
</reference>
<reference key="2">
    <citation type="journal article" date="2017" name="Plant J.">
        <title>Araport11: a complete reannotation of the Arabidopsis thaliana reference genome.</title>
        <authorList>
            <person name="Cheng C.Y."/>
            <person name="Krishnakumar V."/>
            <person name="Chan A.P."/>
            <person name="Thibaud-Nissen F."/>
            <person name="Schobel S."/>
            <person name="Town C.D."/>
        </authorList>
    </citation>
    <scope>GENOME REANNOTATION</scope>
    <source>
        <strain>cv. Columbia</strain>
    </source>
</reference>
<reference key="3">
    <citation type="journal article" date="2003" name="Science">
        <title>Empirical analysis of transcriptional activity in the Arabidopsis genome.</title>
        <authorList>
            <person name="Yamada K."/>
            <person name="Lim J."/>
            <person name="Dale J.M."/>
            <person name="Chen H."/>
            <person name="Shinn P."/>
            <person name="Palm C.J."/>
            <person name="Southwick A.M."/>
            <person name="Wu H.C."/>
            <person name="Kim C.J."/>
            <person name="Nguyen M."/>
            <person name="Pham P.K."/>
            <person name="Cheuk R.F."/>
            <person name="Karlin-Newmann G."/>
            <person name="Liu S.X."/>
            <person name="Lam B."/>
            <person name="Sakano H."/>
            <person name="Wu T."/>
            <person name="Yu G."/>
            <person name="Miranda M."/>
            <person name="Quach H.L."/>
            <person name="Tripp M."/>
            <person name="Chang C.H."/>
            <person name="Lee J.M."/>
            <person name="Toriumi M.J."/>
            <person name="Chan M.M."/>
            <person name="Tang C.C."/>
            <person name="Onodera C.S."/>
            <person name="Deng J.M."/>
            <person name="Akiyama K."/>
            <person name="Ansari Y."/>
            <person name="Arakawa T."/>
            <person name="Banh J."/>
            <person name="Banno F."/>
            <person name="Bowser L."/>
            <person name="Brooks S.Y."/>
            <person name="Carninci P."/>
            <person name="Chao Q."/>
            <person name="Choy N."/>
            <person name="Enju A."/>
            <person name="Goldsmith A.D."/>
            <person name="Gurjal M."/>
            <person name="Hansen N.F."/>
            <person name="Hayashizaki Y."/>
            <person name="Johnson-Hopson C."/>
            <person name="Hsuan V.W."/>
            <person name="Iida K."/>
            <person name="Karnes M."/>
            <person name="Khan S."/>
            <person name="Koesema E."/>
            <person name="Ishida J."/>
            <person name="Jiang P.X."/>
            <person name="Jones T."/>
            <person name="Kawai J."/>
            <person name="Kamiya A."/>
            <person name="Meyers C."/>
            <person name="Nakajima M."/>
            <person name="Narusaka M."/>
            <person name="Seki M."/>
            <person name="Sakurai T."/>
            <person name="Satou M."/>
            <person name="Tamse R."/>
            <person name="Vaysberg M."/>
            <person name="Wallender E.K."/>
            <person name="Wong C."/>
            <person name="Yamamura Y."/>
            <person name="Yuan S."/>
            <person name="Shinozaki K."/>
            <person name="Davis R.W."/>
            <person name="Theologis A."/>
            <person name="Ecker J.R."/>
        </authorList>
    </citation>
    <scope>NUCLEOTIDE SEQUENCE [LARGE SCALE MRNA] (ISOFORM 1)</scope>
    <source>
        <strain>cv. Columbia</strain>
    </source>
</reference>
<reference key="4">
    <citation type="submission" date="2006-07" db="EMBL/GenBank/DDBJ databases">
        <title>Large-scale analysis of RIKEN Arabidopsis full-length (RAFL) cDNAs.</title>
        <authorList>
            <person name="Totoki Y."/>
            <person name="Seki M."/>
            <person name="Ishida J."/>
            <person name="Nakajima M."/>
            <person name="Enju A."/>
            <person name="Kamiya A."/>
            <person name="Narusaka M."/>
            <person name="Shin-i T."/>
            <person name="Nakagawa M."/>
            <person name="Sakamoto N."/>
            <person name="Oishi K."/>
            <person name="Kohara Y."/>
            <person name="Kobayashi M."/>
            <person name="Toyoda A."/>
            <person name="Sakaki Y."/>
            <person name="Sakurai T."/>
            <person name="Iida K."/>
            <person name="Akiyama K."/>
            <person name="Satou M."/>
            <person name="Toyoda T."/>
            <person name="Konagaya A."/>
            <person name="Carninci P."/>
            <person name="Kawai J."/>
            <person name="Hayashizaki Y."/>
            <person name="Shinozaki K."/>
        </authorList>
    </citation>
    <scope>NUCLEOTIDE SEQUENCE [LARGE SCALE MRNA] OF 544-787 (ISOFORM 1/2/3)</scope>
    <source>
        <strain>cv. Columbia</strain>
    </source>
</reference>
<reference key="5">
    <citation type="journal article" date="2001" name="Plant Physiol.">
        <title>Isolation and characterization of mutants defective in seed coat mucilage secretory cell development in Arabidopsis.</title>
        <authorList>
            <person name="Western T.L."/>
            <person name="Burn J."/>
            <person name="Tan W.L."/>
            <person name="Skinner D.J."/>
            <person name="Martin-McCaffrey L."/>
            <person name="Moffatt B.A."/>
            <person name="Haughn G.W."/>
        </authorList>
    </citation>
    <scope>FUNCTION</scope>
    <scope>DISRUPTION PHENOTYPE</scope>
    <source>
        <strain>cv. Columbia</strain>
    </source>
</reference>
<reference key="6">
    <citation type="journal article" date="2003" name="Nucleic Acids Res.">
        <title>Improving the Arabidopsis genome annotation using maximal transcript alignment assemblies.</title>
        <authorList>
            <person name="Haas B.J."/>
            <person name="Delcher A.L."/>
            <person name="Mount S.M."/>
            <person name="Wortman J.R."/>
            <person name="Smith R.K. Jr."/>
            <person name="Hannick L.I."/>
            <person name="Maiti R."/>
            <person name="Ronning C.M."/>
            <person name="Rusch D.B."/>
            <person name="Town C.D."/>
            <person name="Salzberg S.L."/>
            <person name="White O."/>
        </authorList>
    </citation>
    <scope>ALTERNATIVE SPLICING</scope>
</reference>
<reference key="7">
    <citation type="journal article" date="2008" name="Plant Physiol.">
        <title>LEUNIG_HOMOLOG and LEUNIG perform partially redundant functions during Arabidopsis embryo and floral development.</title>
        <authorList>
            <person name="Sitaraman J."/>
            <person name="Bui M."/>
            <person name="Liu Z."/>
        </authorList>
    </citation>
    <scope>FUNCTION</scope>
    <scope>DISRUPTION PHENOTYPE</scope>
    <scope>MUTAGENESIS OF SER-123</scope>
    <scope>INTERACTION WITH SEU</scope>
    <scope>TISSUE SPECIFICITY</scope>
    <scope>INDUCTION BY BIOTIC AND ABIOTIC STRESSES</scope>
</reference>
<reference key="8">
    <citation type="journal article" date="2009" name="Plant Cell">
        <title>YABBYs and the transcriptional corepressors LEUNIG and LEUNIG_HOMOLOG maintain leaf polarity and meristem activity in Arabidopsis.</title>
        <authorList>
            <person name="Stahle M.I."/>
            <person name="Kuehlich J."/>
            <person name="Staron L."/>
            <person name="von Arnim A.G."/>
            <person name="Golz J.F."/>
        </authorList>
    </citation>
    <scope>FUNCTION</scope>
    <scope>DISRUPTION PHENOTYPE</scope>
    <scope>INTERACTION WITH YAB3; YAB5 AND YAB1/FIL</scope>
    <scope>DEVELOPMENTAL STAGE</scope>
</reference>
<reference key="9">
    <citation type="journal article" date="2009" name="Plant Physiol.">
        <title>Large-scale Arabidopsis phosphoproteome profiling reveals novel chloroplast kinase substrates and phosphorylation networks.</title>
        <authorList>
            <person name="Reiland S."/>
            <person name="Messerli G."/>
            <person name="Baerenfaller K."/>
            <person name="Gerrits B."/>
            <person name="Endler A."/>
            <person name="Grossmann J."/>
            <person name="Gruissem W."/>
            <person name="Baginsky S."/>
        </authorList>
    </citation>
    <scope>IDENTIFICATION BY MASS SPECTROMETRY [LARGE SCALE ANALYSIS]</scope>
</reference>
<reference key="10">
    <citation type="journal article" date="2011" name="J. Integr. Plant Biol.">
        <title>LEUNIG_HOMOLOG and LEUNIG regulate seed mucilage extrusion in Arabidopsis.</title>
        <authorList>
            <person name="Bui M."/>
            <person name="Lim N."/>
            <person name="Sijacic P."/>
            <person name="Liu Z."/>
        </authorList>
    </citation>
    <scope>FUNCTION</scope>
    <scope>DISRUPTION PHENOTYPE</scope>
    <source>
        <strain>cv. Columbia</strain>
        <strain>cv. Landsberg erecta</strain>
    </source>
</reference>
<reference key="11">
    <citation type="journal article" date="2011" name="Plant Physiol.">
        <title>The transcriptional regulator LEUNIG_HOMOLOG regulates mucilage release from the Arabidopsis testa.</title>
        <authorList>
            <person name="Walker M."/>
            <person name="Tehseen M."/>
            <person name="Doblin M.S."/>
            <person name="Pettolino F.A."/>
            <person name="Wilson S.M."/>
            <person name="Bacic A."/>
            <person name="Golz J.F."/>
        </authorList>
    </citation>
    <scope>FUNCTION</scope>
    <scope>DISRUPTION PHENOTYPE</scope>
</reference>
<reference key="12">
    <citation type="journal article" date="2011" name="Plant Physiol.">
        <title>The Arabidopsis transcription factor LUH/MUM1 is required for extrusion of seed coat mucilage.</title>
        <authorList>
            <person name="Huang J."/>
            <person name="DeBowles D."/>
            <person name="Esfandiari E."/>
            <person name="Dean G."/>
            <person name="Carpita N.C."/>
            <person name="Haughn G.W."/>
        </authorList>
    </citation>
    <scope>SUBCELLULAR LOCATION</scope>
    <scope>FUNCTION</scope>
    <scope>TISSUE SPECIFICITY</scope>
    <scope>DEVELOPMENTAL STAGE</scope>
    <source>
        <strain>cv. Col-2</strain>
        <strain>cv. Landsberg erecta</strain>
    </source>
</reference>
<reference key="13">
    <citation type="journal article" date="2014" name="BMC Plant Biol.">
        <title>Involvement of co-repressor LUH and the adapter proteins SLK1 and SLK2 in the regulation of abiotic stress response genes in Arabidopsis.</title>
        <authorList>
            <person name="Shrestha B."/>
            <person name="Guragain B."/>
            <person name="Sridhar V.V."/>
        </authorList>
    </citation>
    <scope>FUNCTION IN ABIOTIC STRESSES</scope>
    <scope>DISRUPTION PHENOTYPE</scope>
    <scope>INTERACTION WITH SLK1 AND SLK2</scope>
</reference>
<reference key="14">
    <citation type="journal article" date="2015" name="Int. J. Mol. Sci.">
        <title>Starting to gel: how Arabidopsis seed coat epidermal cells produce specialized secondary cell walls.</title>
        <authorList>
            <person name="Voiniciuc C."/>
            <person name="Yang B."/>
            <person name="Schmidt M.H.-W."/>
            <person name="Guenl M."/>
            <person name="Usadel B."/>
        </authorList>
    </citation>
    <scope>REVIEW ON MUCILAGE EXTRUSION</scope>
</reference>